<name>HLDD_ECOSM</name>
<feature type="chain" id="PRO_1000148080" description="ADP-L-glycero-D-manno-heptose-6-epimerase">
    <location>
        <begin position="1"/>
        <end position="310"/>
    </location>
</feature>
<feature type="active site" description="Proton acceptor" evidence="1">
    <location>
        <position position="140"/>
    </location>
</feature>
<feature type="active site" description="Proton acceptor" evidence="1">
    <location>
        <position position="178"/>
    </location>
</feature>
<feature type="binding site" evidence="1">
    <location>
        <begin position="10"/>
        <end position="11"/>
    </location>
    <ligand>
        <name>NADP(+)</name>
        <dbReference type="ChEBI" id="CHEBI:58349"/>
    </ligand>
</feature>
<feature type="binding site" evidence="1">
    <location>
        <begin position="31"/>
        <end position="32"/>
    </location>
    <ligand>
        <name>NADP(+)</name>
        <dbReference type="ChEBI" id="CHEBI:58349"/>
    </ligand>
</feature>
<feature type="binding site" evidence="1">
    <location>
        <position position="38"/>
    </location>
    <ligand>
        <name>NADP(+)</name>
        <dbReference type="ChEBI" id="CHEBI:58349"/>
    </ligand>
</feature>
<feature type="binding site" evidence="1">
    <location>
        <position position="53"/>
    </location>
    <ligand>
        <name>NADP(+)</name>
        <dbReference type="ChEBI" id="CHEBI:58349"/>
    </ligand>
</feature>
<feature type="binding site" evidence="1">
    <location>
        <begin position="75"/>
        <end position="79"/>
    </location>
    <ligand>
        <name>NADP(+)</name>
        <dbReference type="ChEBI" id="CHEBI:58349"/>
    </ligand>
</feature>
<feature type="binding site" evidence="1">
    <location>
        <position position="92"/>
    </location>
    <ligand>
        <name>NADP(+)</name>
        <dbReference type="ChEBI" id="CHEBI:58349"/>
    </ligand>
</feature>
<feature type="binding site" evidence="1">
    <location>
        <position position="144"/>
    </location>
    <ligand>
        <name>NADP(+)</name>
        <dbReference type="ChEBI" id="CHEBI:58349"/>
    </ligand>
</feature>
<feature type="binding site" evidence="1">
    <location>
        <position position="169"/>
    </location>
    <ligand>
        <name>substrate</name>
    </ligand>
</feature>
<feature type="binding site" evidence="1">
    <location>
        <position position="170"/>
    </location>
    <ligand>
        <name>NADP(+)</name>
        <dbReference type="ChEBI" id="CHEBI:58349"/>
    </ligand>
</feature>
<feature type="binding site" evidence="1">
    <location>
        <position position="178"/>
    </location>
    <ligand>
        <name>NADP(+)</name>
        <dbReference type="ChEBI" id="CHEBI:58349"/>
    </ligand>
</feature>
<feature type="binding site" evidence="1">
    <location>
        <position position="180"/>
    </location>
    <ligand>
        <name>substrate</name>
    </ligand>
</feature>
<feature type="binding site" evidence="1">
    <location>
        <position position="187"/>
    </location>
    <ligand>
        <name>substrate</name>
    </ligand>
</feature>
<feature type="binding site" evidence="1">
    <location>
        <begin position="201"/>
        <end position="204"/>
    </location>
    <ligand>
        <name>substrate</name>
    </ligand>
</feature>
<feature type="binding site" evidence="1">
    <location>
        <position position="209"/>
    </location>
    <ligand>
        <name>substrate</name>
    </ligand>
</feature>
<feature type="binding site" evidence="1">
    <location>
        <position position="272"/>
    </location>
    <ligand>
        <name>substrate</name>
    </ligand>
</feature>
<feature type="modified residue" description="N6-acetyllysine" evidence="1">
    <location>
        <position position="267"/>
    </location>
</feature>
<gene>
    <name evidence="1" type="primary">hldD</name>
    <name type="ordered locus">EcSMS35_3956</name>
</gene>
<accession>B1LK58</accession>
<dbReference type="EC" id="5.1.3.20" evidence="1"/>
<dbReference type="EMBL" id="CP000970">
    <property type="protein sequence ID" value="ACB19015.1"/>
    <property type="molecule type" value="Genomic_DNA"/>
</dbReference>
<dbReference type="SMR" id="B1LK58"/>
<dbReference type="KEGG" id="ecm:EcSMS35_3956"/>
<dbReference type="HOGENOM" id="CLU_007383_1_3_6"/>
<dbReference type="UniPathway" id="UPA00356">
    <property type="reaction ID" value="UER00440"/>
</dbReference>
<dbReference type="Proteomes" id="UP000007011">
    <property type="component" value="Chromosome"/>
</dbReference>
<dbReference type="GO" id="GO:0008712">
    <property type="term" value="F:ADP-glyceromanno-heptose 6-epimerase activity"/>
    <property type="evidence" value="ECO:0007669"/>
    <property type="project" value="UniProtKB-UniRule"/>
</dbReference>
<dbReference type="GO" id="GO:0050661">
    <property type="term" value="F:NADP binding"/>
    <property type="evidence" value="ECO:0007669"/>
    <property type="project" value="InterPro"/>
</dbReference>
<dbReference type="GO" id="GO:0097171">
    <property type="term" value="P:ADP-L-glycero-beta-D-manno-heptose biosynthetic process"/>
    <property type="evidence" value="ECO:0007669"/>
    <property type="project" value="UniProtKB-UniPathway"/>
</dbReference>
<dbReference type="GO" id="GO:0005975">
    <property type="term" value="P:carbohydrate metabolic process"/>
    <property type="evidence" value="ECO:0007669"/>
    <property type="project" value="UniProtKB-UniRule"/>
</dbReference>
<dbReference type="CDD" id="cd05248">
    <property type="entry name" value="ADP_GME_SDR_e"/>
    <property type="match status" value="1"/>
</dbReference>
<dbReference type="Gene3D" id="3.40.50.720">
    <property type="entry name" value="NAD(P)-binding Rossmann-like Domain"/>
    <property type="match status" value="1"/>
</dbReference>
<dbReference type="Gene3D" id="3.90.25.10">
    <property type="entry name" value="UDP-galactose 4-epimerase, domain 1"/>
    <property type="match status" value="1"/>
</dbReference>
<dbReference type="HAMAP" id="MF_01601">
    <property type="entry name" value="Heptose_epimerase"/>
    <property type="match status" value="1"/>
</dbReference>
<dbReference type="InterPro" id="IPR001509">
    <property type="entry name" value="Epimerase_deHydtase"/>
</dbReference>
<dbReference type="InterPro" id="IPR011912">
    <property type="entry name" value="Heptose_epim"/>
</dbReference>
<dbReference type="InterPro" id="IPR036291">
    <property type="entry name" value="NAD(P)-bd_dom_sf"/>
</dbReference>
<dbReference type="NCBIfam" id="TIGR02197">
    <property type="entry name" value="heptose_epim"/>
    <property type="match status" value="1"/>
</dbReference>
<dbReference type="NCBIfam" id="NF008360">
    <property type="entry name" value="PRK11150.1"/>
    <property type="match status" value="1"/>
</dbReference>
<dbReference type="PANTHER" id="PTHR43103:SF3">
    <property type="entry name" value="ADP-L-GLYCERO-D-MANNO-HEPTOSE-6-EPIMERASE"/>
    <property type="match status" value="1"/>
</dbReference>
<dbReference type="PANTHER" id="PTHR43103">
    <property type="entry name" value="NUCLEOSIDE-DIPHOSPHATE-SUGAR EPIMERASE"/>
    <property type="match status" value="1"/>
</dbReference>
<dbReference type="Pfam" id="PF01370">
    <property type="entry name" value="Epimerase"/>
    <property type="match status" value="1"/>
</dbReference>
<dbReference type="SUPFAM" id="SSF51735">
    <property type="entry name" value="NAD(P)-binding Rossmann-fold domains"/>
    <property type="match status" value="1"/>
</dbReference>
<protein>
    <recommendedName>
        <fullName evidence="1">ADP-L-glycero-D-manno-heptose-6-epimerase</fullName>
        <ecNumber evidence="1">5.1.3.20</ecNumber>
    </recommendedName>
    <alternativeName>
        <fullName evidence="1">ADP-L-glycero-beta-D-manno-heptose-6-epimerase</fullName>
        <shortName evidence="1">ADP-glyceromanno-heptose 6-epimerase</shortName>
        <shortName evidence="1">ADP-hep 6-epimerase</shortName>
        <shortName evidence="1">AGME</shortName>
    </alternativeName>
</protein>
<comment type="function">
    <text evidence="1">Catalyzes the interconversion between ADP-D-glycero-beta-D-manno-heptose and ADP-L-glycero-beta-D-manno-heptose via an epimerization at carbon 6 of the heptose.</text>
</comment>
<comment type="catalytic activity">
    <reaction evidence="1">
        <text>ADP-D-glycero-beta-D-manno-heptose = ADP-L-glycero-beta-D-manno-heptose</text>
        <dbReference type="Rhea" id="RHEA:17577"/>
        <dbReference type="ChEBI" id="CHEBI:59967"/>
        <dbReference type="ChEBI" id="CHEBI:61506"/>
        <dbReference type="EC" id="5.1.3.20"/>
    </reaction>
</comment>
<comment type="cofactor">
    <cofactor evidence="1">
        <name>NADP(+)</name>
        <dbReference type="ChEBI" id="CHEBI:58349"/>
    </cofactor>
    <text evidence="1">Binds 1 NADP(+) per subunit.</text>
</comment>
<comment type="pathway">
    <text evidence="1">Nucleotide-sugar biosynthesis; ADP-L-glycero-beta-D-manno-heptose biosynthesis; ADP-L-glycero-beta-D-manno-heptose from D-glycero-beta-D-manno-heptose 7-phosphate: step 4/4.</text>
</comment>
<comment type="subunit">
    <text evidence="1">Homopentamer.</text>
</comment>
<comment type="domain">
    <text evidence="1">Contains a large N-terminal NADP-binding domain, and a smaller C-terminal substrate-binding domain.</text>
</comment>
<comment type="similarity">
    <text evidence="1">Belongs to the NAD(P)-dependent epimerase/dehydratase family. HldD subfamily.</text>
</comment>
<sequence length="310" mass="34860">MIIVTGGAGFIGSNIVKALNDKGITDILVVDNLKDGTKFVNLVDLDIADYMDKEDFLIQIMAGEEFGDVEAIFHEGACSSTTEWDGKYMMDNNYQYSKELLHYCLEREIPLLYASSAATYGGRTSDFIESREYEKPLNVYGYSKFLFDEYVRQILPEANSQIVGFRYFNVYGPREGHKGSMASVAFHLNTQLNNGESPKLFEGSENFKRDFVYVGDVADVNLWFLENGVSGIFNLGTGRAESFQAVADATLAYHKKGQIEYIPFPDKLKGRYQAFTQADLTNLRAAGYDKPFKTVAEGVTEYMAWLNRDA</sequence>
<evidence type="ECO:0000255" key="1">
    <source>
        <dbReference type="HAMAP-Rule" id="MF_01601"/>
    </source>
</evidence>
<organism>
    <name type="scientific">Escherichia coli (strain SMS-3-5 / SECEC)</name>
    <dbReference type="NCBI Taxonomy" id="439855"/>
    <lineage>
        <taxon>Bacteria</taxon>
        <taxon>Pseudomonadati</taxon>
        <taxon>Pseudomonadota</taxon>
        <taxon>Gammaproteobacteria</taxon>
        <taxon>Enterobacterales</taxon>
        <taxon>Enterobacteriaceae</taxon>
        <taxon>Escherichia</taxon>
    </lineage>
</organism>
<proteinExistence type="inferred from homology"/>
<keyword id="KW-0007">Acetylation</keyword>
<keyword id="KW-0119">Carbohydrate metabolism</keyword>
<keyword id="KW-0413">Isomerase</keyword>
<keyword id="KW-0521">NADP</keyword>
<reference key="1">
    <citation type="journal article" date="2008" name="J. Bacteriol.">
        <title>Insights into the environmental resistance gene pool from the genome sequence of the multidrug-resistant environmental isolate Escherichia coli SMS-3-5.</title>
        <authorList>
            <person name="Fricke W.F."/>
            <person name="Wright M.S."/>
            <person name="Lindell A.H."/>
            <person name="Harkins D.M."/>
            <person name="Baker-Austin C."/>
            <person name="Ravel J."/>
            <person name="Stepanauskas R."/>
        </authorList>
    </citation>
    <scope>NUCLEOTIDE SEQUENCE [LARGE SCALE GENOMIC DNA]</scope>
    <source>
        <strain>SMS-3-5 / SECEC</strain>
    </source>
</reference>